<comment type="function">
    <text evidence="1 5 9 10 11 13">Transcription factor (PubMed:22194193, PubMed:31691806). Binds to specific sequence motif 5'-TAATTA-3' in regulatory elements of target genes, such as histone demethylase KDM5C (PubMed:22194193, PubMed:31691806). Positively modulates transcription of KDM5C (PubMed:31691806). Activates expression of KDM5C synergistically with histone lysine demethylase PHF8 and perhaps in competition with transcription regulator ZNF711; synergy may be related to enrichment of histone H3K4me3 in regulatory elements (PubMed:31691806). Required for normal brain development (PubMed:11889467, PubMed:12379852, PubMed:14722918). Plays a role in neuronal proliferation, interneuronal migration and differentiation in the embryonic forebrain (By similarity). May also be involved in axonal guidance in the floor plate (By similarity).</text>
</comment>
<comment type="interaction">
    <interactant intactId="EBI-11107474">
        <id>Q96QS3</id>
    </interactant>
    <interactant intactId="EBI-351710">
        <id>P12814</id>
        <label>ACTN1</label>
    </interactant>
    <organismsDiffer>false</organismsDiffer>
    <experiments>2</experiments>
</comment>
<comment type="interaction">
    <interactant intactId="EBI-11107474">
        <id>Q96QS3</id>
    </interactant>
    <interactant intactId="EBI-1560800">
        <id>Q9UPP1</id>
        <label>PHF8</label>
    </interactant>
    <organismsDiffer>false</organismsDiffer>
    <experiments>3</experiments>
</comment>
<comment type="interaction">
    <interactant intactId="EBI-11107474">
        <id>Q96QS3</id>
    </interactant>
    <interactant intactId="EBI-79165">
        <id>Q9NRD5</id>
        <label>PICK1</label>
    </interactant>
    <organismsDiffer>false</organismsDiffer>
    <experiments>2</experiments>
</comment>
<comment type="subcellular location">
    <subcellularLocation>
        <location evidence="2 3">Nucleus</location>
    </subcellularLocation>
</comment>
<comment type="tissue specificity">
    <text evidence="5 6 7">Expressed predominantly in fetal and adult brain and skeletal muscle. Expression is specific to the telencephalon and ventral thalamus. There is an absence of expression in the cerebellum throughout development and also in adult.</text>
</comment>
<comment type="disease" evidence="9 10 11 13">
    <disease id="DI-00674">
        <name>Lissencephaly, X-linked 2</name>
        <acronym>LISX2</acronym>
        <description>A classic type lissencephaly associated with abnormal genitalia. Patients have severe congenital or postnatal microcephaly, lissencephaly, agenesis of the corpus callosum, neonatal-onset intractable epilepsy, poor temperature regulation, chronic diarrhea, and ambiguous or underdeveloped genitalia.</description>
        <dbReference type="MIM" id="300215"/>
    </disease>
    <text evidence="15">The disease is caused by variants affecting the gene represented in this entry. Also called X-linked lissencephaly with abnormal genitalia (XLAG).</text>
</comment>
<comment type="disease" evidence="5 8 11 12">
    <disease id="DI-00471">
        <name>Developmental and epileptic encephalopathy 1</name>
        <acronym>DEE1</acronym>
        <description>A severe form of epilepsy characterized by frequent tonic seizures or spasms beginning in infancy with a specific EEG finding of suppression-burst patterns, characterized by high-voltage bursts alternating with almost flat suppression phases. Patients may progress to West syndrome, which is characterized by tonic spasms with clustering, arrest of psychomotor development, and hypsarrhythmia on EEG.</description>
        <dbReference type="MIM" id="308350"/>
    </disease>
    <text>The disease is caused by variants affecting the gene represented in this entry.</text>
</comment>
<comment type="disease" evidence="5">
    <disease id="DI-02147">
        <name>Partington syndrome</name>
        <acronym>PRTS</acronym>
        <description>An X-linked developmental disorder characterized by intellectual disability, episodic dystonic hand movements, lower limb spasticity, and dysarthria.</description>
        <dbReference type="MIM" id="309510"/>
    </disease>
    <text>The disease is caused by variants affecting the gene represented in this entry.</text>
</comment>
<comment type="disease" evidence="6">
    <disease id="DI-00724">
        <name>Intellectual developmental disorder, X-linked 29</name>
        <acronym>XLID29</acronym>
        <description>A disorder characterized by significantly below average general intellectual functioning associated with impairments in adaptive behavior and manifested during the developmental period. Intellectual deficiency is the only primary symptom of non-syndromic X-linked forms, while syndromic intellectual disability presents with associated physical, neurological and/or psychiatric manifestations.</description>
        <dbReference type="MIM" id="300419"/>
    </disease>
    <text>The disease is caused by variants affecting the gene represented in this entry.</text>
</comment>
<comment type="disease" evidence="10 11 13">
    <disease id="DI-01175">
        <name>Agenesis of the corpus callosum, with abnormal genitalia</name>
        <acronym>ACCAG</acronym>
        <description>An X-linked syndrome with variable expression in females. It is characterized by agenesis of corpus callosum, intellectual disability and seizures. Manifestations in surviving males include severe acquired micrencephaly, intellectual disability, limb contractures, scoliosis, tapered fingers with hyperconvex nails, a characteristic face with large eyes, prominent supraorbital ridges, synophrys, optic atrophy, broad alveolar ridges, and seizures. Urologic anomalies include renal dysplasia, cryptorchidism, and hypospadias.</description>
        <dbReference type="MIM" id="300004"/>
    </disease>
    <text>The disease is caused by variants affecting the gene represented in this entry.</text>
</comment>
<comment type="similarity">
    <text evidence="16">Belongs to the paired homeobox family. Bicoid subfamily.</text>
</comment>
<reference key="1">
    <citation type="journal article" date="2002" name="Mol. Genet. Metab.">
        <title>Human ARX gene: genomic characterization and expression.</title>
        <authorList>
            <person name="Ohira R.H."/>
            <person name="Zhang Y.H."/>
            <person name="Guo W."/>
            <person name="Dipple K."/>
            <person name="Shih S."/>
            <person name="Doerr J."/>
            <person name="Huang B.-L."/>
            <person name="Fu L."/>
            <person name="Abu-Khalil A."/>
            <person name="Geschwind D."/>
            <person name="McCabe E."/>
        </authorList>
    </citation>
    <scope>NUCLEOTIDE SEQUENCE [MRNA]</scope>
    <scope>TISSUE SPECIFICITY</scope>
</reference>
<reference key="2">
    <citation type="journal article" date="2002" name="Am. J. Med. Genet.">
        <title>Variable expression of mental retardation, autism, seizures, and dystonic hand movements in two families with an identical ARX gene mutation.</title>
        <authorList>
            <person name="Turner G."/>
            <person name="Partington M."/>
            <person name="Kerr B."/>
            <person name="Mangelsdorf M."/>
            <person name="Gecz J."/>
        </authorList>
    </citation>
    <scope>VARIANT DEE1 ALA-ALA-ALA-ALA-ALA-ALA-ALA-ALA-155 INS</scope>
</reference>
<reference key="3">
    <citation type="journal article" date="2002" name="Hum. Mol. Genet.">
        <title>ARX, a novel Prd-class-homeobox gene highly expressed in the telencephalon, is mutated in X-linked mental retardation.</title>
        <authorList>
            <person name="Bienvenu T."/>
            <person name="Poirier K."/>
            <person name="Friocourt G."/>
            <person name="Bahi N."/>
            <person name="Beaumont D."/>
            <person name="Fauchereau F."/>
            <person name="Ben-Jeema L."/>
            <person name="Zemni R."/>
            <person name="Vinet M.-C."/>
            <person name="Francis F."/>
            <person name="Couvert P."/>
            <person name="Gomot M."/>
            <person name="Moraine C."/>
            <person name="van Bokhoven H."/>
            <person name="Kalscheuer V."/>
            <person name="Frints S."/>
            <person name="Gecz J."/>
            <person name="Ohzaki K."/>
            <person name="Chaabouni H."/>
            <person name="Fryns J.-P."/>
            <person name="Desportes V."/>
            <person name="Beldjord C."/>
            <person name="Chelly J."/>
        </authorList>
    </citation>
    <scope>VARIANTS XLID29 PRO-33 AND SER-286</scope>
    <scope>TISSUE SPECIFICITY</scope>
</reference>
<reference key="4">
    <citation type="journal article" date="2002" name="Nat. Genet.">
        <title>Mutations in the human ortholog of aristaless cause X-linked mental retardation and epilepsy.</title>
        <authorList>
            <person name="Stroemme P."/>
            <person name="Mangelsdorf M.E."/>
            <person name="Shaw M.A."/>
            <person name="Lower K.M."/>
            <person name="Lewis S.M.E."/>
            <person name="Bruyere H."/>
            <person name="Luetcherath V."/>
            <person name="Gedeon A.K."/>
            <person name="Wallace R.H."/>
            <person name="Scheffer I.E."/>
            <person name="Turner G."/>
            <person name="Partington M."/>
            <person name="Frints S.G.M."/>
            <person name="Fryns J.-P."/>
            <person name="Sutherland G.R."/>
            <person name="Mulley J.C."/>
            <person name="Gecz J."/>
        </authorList>
    </citation>
    <scope>FUNCTION</scope>
    <scope>VARIANTS DEE1 ALA-ALA-ALA-ALA-ALA-ALA-ALA-115 INS; ALA-ALA-ALA-ALA-ALA-ALA-ALA-ALA-155 INS AND LEU-353</scope>
    <scope>VARIANT PRTS ALA-ALA-ALA-ALA-ALA-ALA-ALA-ALA-155 INS</scope>
    <scope>TISSUE SPECIFICITY</scope>
</reference>
<reference key="5">
    <citation type="journal article" date="2002" name="Nat. Genet.">
        <title>Mutation of ARX causes abnormal development of forebrain and testes in mice and X-linked lissencephaly with abnormal genitalia in humans.</title>
        <authorList>
            <person name="Kitamura K."/>
            <person name="Yanazawa M."/>
            <person name="Sugiyama N."/>
            <person name="Miura H."/>
            <person name="Iizuka-Kogo A."/>
            <person name="Kusaka M."/>
            <person name="Omichi K."/>
            <person name="Suzuki R."/>
            <person name="Kato-Fukui Y."/>
            <person name="Kamiirisa K."/>
            <person name="Matsuo M."/>
            <person name="Kamijo S."/>
            <person name="Kasahara M."/>
            <person name="Yoshioka H."/>
            <person name="Ogata T."/>
            <person name="Fukuda T."/>
            <person name="Kondo I."/>
            <person name="Kato M."/>
            <person name="Dobyns W.B."/>
            <person name="Yokoyama M."/>
            <person name="Morohashi K."/>
        </authorList>
    </citation>
    <scope>FUNCTION</scope>
    <scope>VARIANTS LISX2 HIS-332 AND GLN-343</scope>
</reference>
<reference key="6">
    <citation type="journal article" date="2004" name="Hum. Mutat.">
        <title>Mutations of ARX are associated with striking pleiotropy and consistent genotype-phenotype correlation.</title>
        <authorList>
            <person name="Kato M."/>
            <person name="Das S."/>
            <person name="Petras K."/>
            <person name="Kitamura K."/>
            <person name="Morohashi K."/>
            <person name="Abuelo D.N."/>
            <person name="Barr M."/>
            <person name="Bonneau D."/>
            <person name="Brady A.F."/>
            <person name="Carpenter N.J."/>
            <person name="Cipero K.L."/>
            <person name="Frisone F."/>
            <person name="Fukuda T."/>
            <person name="Guerrini R."/>
            <person name="Iida E."/>
            <person name="Itoh M."/>
            <person name="Lewanda A.F."/>
            <person name="Nanba Y."/>
            <person name="Oka A."/>
            <person name="Proud V.K."/>
            <person name="Saugier-Veber P."/>
            <person name="Schelley S.L."/>
            <person name="Selicorni A."/>
            <person name="Shaner R."/>
            <person name="Silengo M."/>
            <person name="Stewart F."/>
            <person name="Sugiyama N."/>
            <person name="Toyama J."/>
            <person name="Toutain A."/>
            <person name="Vargas A.L."/>
            <person name="Yanazawa M."/>
            <person name="Zackai E.H."/>
            <person name="Dobyns W.B."/>
        </authorList>
    </citation>
    <scope>FUNCTION</scope>
    <scope>VARIANTS LISX2 PRO-332; HIS-332; GLN-343; ARG-353 AND THR-521</scope>
    <scope>VARIANT ACCAG ASN-333</scope>
</reference>
<reference key="7">
    <citation type="journal article" date="2012" name="Hum. Mol. Genet.">
        <title>ARX homeodomain mutations abolish DNA binding and lead to a loss of transcriptional repression.</title>
        <authorList>
            <person name="Shoubridge C."/>
            <person name="Tan M.H."/>
            <person name="Seiboth G."/>
            <person name="Gecz J."/>
        </authorList>
    </citation>
    <scope>FUNCTION</scope>
    <scope>CHARACTERIZATION OF VARIANT ACCAG ASN-333</scope>
    <scope>CHARACTERIZATION OF VARIANT DEE1 LEU-353</scope>
    <scope>CHARACTERIZATION OF VARIANTS LISX2 PRO-332; GLN-343 AND ARG-353</scope>
    <scope>MUTAGENESIS OF ARG-358 AND ARG-379</scope>
</reference>
<reference key="8">
    <citation type="journal article" date="2017" name="Hum. Mutat.">
        <title>Diagnostic targeted resequencing in 349 patients with drug-resistant pediatric epilepsies identifies causative mutations in 30 different genes.</title>
        <authorList>
            <consortium name="Clinical Study Group"/>
            <person name="Parrini E."/>
            <person name="Marini C."/>
            <person name="Mei D."/>
            <person name="Galuppi A."/>
            <person name="Cellini E."/>
            <person name="Pucatti D."/>
            <person name="Chiti L."/>
            <person name="Rutigliano D."/>
            <person name="Bianchini C."/>
            <person name="Virdo S."/>
            <person name="De Vita D."/>
            <person name="Bigoni S."/>
            <person name="Barba C."/>
            <person name="Mari F."/>
            <person name="Montomoli M."/>
            <person name="Pisano T."/>
            <person name="Rosati A."/>
            <person name="Guerrini R."/>
        </authorList>
    </citation>
    <scope>VARIANT DEE1 LEU-353</scope>
</reference>
<reference key="9">
    <citation type="journal article" date="2019" name="Hum. Mol. Genet.">
        <title>Histone demethylase KDM5C is a SAHA-sensitive central hub at the crossroads of transcriptional axes involved in multiple neurodevelopmental disorders.</title>
        <authorList>
            <person name="Poeta L."/>
            <person name="Padula A."/>
            <person name="Attianese B."/>
            <person name="Valentino M."/>
            <person name="Verrillo L."/>
            <person name="Filosa S."/>
            <person name="Shoubridge C."/>
            <person name="Barra A."/>
            <person name="Schwartz C.E."/>
            <person name="Christensen J."/>
            <person name="van Bokhoven H."/>
            <person name="Helin K."/>
            <person name="Lioi M.B."/>
            <person name="Collombat P."/>
            <person name="Gecz J."/>
            <person name="Altucci L."/>
            <person name="Di Schiavi E."/>
            <person name="Miano M.G."/>
        </authorList>
    </citation>
    <scope>FUNCTION</scope>
    <scope>CHARACTERIZATION OF VARIANTS LISX2 PRO-332; GLN-343 AND ARG-353</scope>
    <scope>CHARACTERIZATION OF VARIANT ACCAG ASN-333</scope>
    <scope>MUTAGENESIS OF ARG-358 AND ARG-379</scope>
</reference>
<reference key="10">
    <citation type="journal article" date="2022" name="Nat. Commun.">
        <title>SLITRK2 variants associated with neurodevelopmental disorders impair excitatory synaptic function and cognition in mice.</title>
        <authorList>
            <person name="El Chehadeh S."/>
            <person name="Han K.A."/>
            <person name="Kim D."/>
            <person name="Jang G."/>
            <person name="Bakhtiari S."/>
            <person name="Lim D."/>
            <person name="Kim H.Y."/>
            <person name="Kim J."/>
            <person name="Kim H."/>
            <person name="Wynn J."/>
            <person name="Chung W.K."/>
            <person name="Vitiello G."/>
            <person name="Cutcutache I."/>
            <person name="Page M."/>
            <person name="Gecz J."/>
            <person name="Harper K."/>
            <person name="Han A.R."/>
            <person name="Kim H.M."/>
            <person name="Wessels M."/>
            <person name="Bayat A."/>
            <person name="Jaen A.F."/>
            <person name="Selicorni A."/>
            <person name="Maitz S."/>
            <person name="de Brouwer A.P.M."/>
            <person name="Silfhout A.V."/>
            <person name="Armstrong M."/>
            <person name="Symonds J."/>
            <person name="Kuery S."/>
            <person name="Isidor B."/>
            <person name="Cogne B."/>
            <person name="Nizon M."/>
            <person name="Feger C."/>
            <person name="Muller J."/>
            <person name="Torti E."/>
            <person name="Grange D.K."/>
            <person name="Willems M."/>
            <person name="Kruer M.C."/>
            <person name="Ko J."/>
            <person name="Piton A."/>
            <person name="Um J.W."/>
        </authorList>
    </citation>
    <scope>VARIANT VAL-370</scope>
</reference>
<gene>
    <name type="primary">ARX</name>
</gene>
<dbReference type="EMBL" id="AY038071">
    <property type="protein sequence ID" value="AAK93901.1"/>
    <property type="molecule type" value="mRNA"/>
</dbReference>
<dbReference type="CCDS" id="CCDS14215.1"/>
<dbReference type="RefSeq" id="NP_620689.1">
    <property type="nucleotide sequence ID" value="NM_139058.3"/>
</dbReference>
<dbReference type="SMR" id="Q96QS3"/>
<dbReference type="BioGRID" id="127998">
    <property type="interactions" value="27"/>
</dbReference>
<dbReference type="FunCoup" id="Q96QS3">
    <property type="interactions" value="1259"/>
</dbReference>
<dbReference type="IntAct" id="Q96QS3">
    <property type="interactions" value="28"/>
</dbReference>
<dbReference type="MINT" id="Q96QS3"/>
<dbReference type="STRING" id="9606.ENSP00000368332"/>
<dbReference type="GlyCosmos" id="Q96QS3">
    <property type="glycosylation" value="2 sites, 1 glycan"/>
</dbReference>
<dbReference type="GlyGen" id="Q96QS3">
    <property type="glycosylation" value="2 sites, 1 O-linked glycan (2 sites)"/>
</dbReference>
<dbReference type="iPTMnet" id="Q96QS3"/>
<dbReference type="PhosphoSitePlus" id="Q96QS3"/>
<dbReference type="BioMuta" id="ARX"/>
<dbReference type="DMDM" id="27923733"/>
<dbReference type="jPOST" id="Q96QS3"/>
<dbReference type="MassIVE" id="Q96QS3"/>
<dbReference type="PaxDb" id="9606-ENSP00000368332"/>
<dbReference type="PeptideAtlas" id="Q96QS3"/>
<dbReference type="ProteomicsDB" id="77895"/>
<dbReference type="Antibodypedia" id="24612">
    <property type="antibodies" value="405 antibodies from 32 providers"/>
</dbReference>
<dbReference type="DNASU" id="170302"/>
<dbReference type="Ensembl" id="ENST00000379044.5">
    <property type="protein sequence ID" value="ENSP00000368332.4"/>
    <property type="gene ID" value="ENSG00000004848.8"/>
</dbReference>
<dbReference type="GeneID" id="170302"/>
<dbReference type="KEGG" id="hsa:170302"/>
<dbReference type="MANE-Select" id="ENST00000379044.5">
    <property type="protein sequence ID" value="ENSP00000368332.4"/>
    <property type="RefSeq nucleotide sequence ID" value="NM_139058.3"/>
    <property type="RefSeq protein sequence ID" value="NP_620689.1"/>
</dbReference>
<dbReference type="UCSC" id="uc004dbp.5">
    <property type="organism name" value="human"/>
</dbReference>
<dbReference type="AGR" id="HGNC:18060"/>
<dbReference type="CTD" id="170302"/>
<dbReference type="DisGeNET" id="170302"/>
<dbReference type="GeneCards" id="ARX"/>
<dbReference type="HGNC" id="HGNC:18060">
    <property type="gene designation" value="ARX"/>
</dbReference>
<dbReference type="HPA" id="ENSG00000004848">
    <property type="expression patterns" value="Group enriched (ovary, skeletal muscle)"/>
</dbReference>
<dbReference type="MalaCards" id="ARX"/>
<dbReference type="MIM" id="300004">
    <property type="type" value="phenotype"/>
</dbReference>
<dbReference type="MIM" id="300215">
    <property type="type" value="phenotype"/>
</dbReference>
<dbReference type="MIM" id="300382">
    <property type="type" value="gene"/>
</dbReference>
<dbReference type="MIM" id="300419">
    <property type="type" value="phenotype"/>
</dbReference>
<dbReference type="MIM" id="308350">
    <property type="type" value="phenotype"/>
</dbReference>
<dbReference type="MIM" id="309510">
    <property type="type" value="phenotype"/>
</dbReference>
<dbReference type="neXtProt" id="NX_Q96QS3"/>
<dbReference type="OpenTargets" id="ENSG00000004848"/>
<dbReference type="Orphanet" id="2508">
    <property type="disease" value="Corpus callosum agenesis-abnormal genitalia syndrome"/>
</dbReference>
<dbReference type="Orphanet" id="1934">
    <property type="disease" value="Early infantile developmental and epileptic encephalopathy"/>
</dbReference>
<dbReference type="Orphanet" id="3451">
    <property type="disease" value="Infantile epileptic spasms syndrome"/>
</dbReference>
<dbReference type="Orphanet" id="364063">
    <property type="disease" value="Infantile epileptic-dyskinetic encephalopathy"/>
</dbReference>
<dbReference type="Orphanet" id="94083">
    <property type="disease" value="Partington syndrome"/>
</dbReference>
<dbReference type="Orphanet" id="452">
    <property type="disease" value="X-linked lissencephaly with abnormal genitalia"/>
</dbReference>
<dbReference type="Orphanet" id="777">
    <property type="disease" value="X-linked non-syndromic intellectual disability"/>
</dbReference>
<dbReference type="Orphanet" id="3175">
    <property type="disease" value="X-linked spasticity-intellectual disability-epilepsy syndrome"/>
</dbReference>
<dbReference type="PharmGKB" id="PA25024"/>
<dbReference type="VEuPathDB" id="HostDB:ENSG00000004848"/>
<dbReference type="eggNOG" id="KOG0490">
    <property type="taxonomic scope" value="Eukaryota"/>
</dbReference>
<dbReference type="GeneTree" id="ENSGT00940000160633"/>
<dbReference type="HOGENOM" id="CLU_047013_7_0_1"/>
<dbReference type="InParanoid" id="Q96QS3"/>
<dbReference type="OMA" id="SYREHAL"/>
<dbReference type="OrthoDB" id="6159439at2759"/>
<dbReference type="PAN-GO" id="Q96QS3">
    <property type="GO annotations" value="4 GO annotations based on evolutionary models"/>
</dbReference>
<dbReference type="PhylomeDB" id="Q96QS3"/>
<dbReference type="TreeFam" id="TF350743"/>
<dbReference type="PathwayCommons" id="Q96QS3"/>
<dbReference type="SignaLink" id="Q96QS3"/>
<dbReference type="SIGNOR" id="Q96QS3"/>
<dbReference type="BioGRID-ORCS" id="170302">
    <property type="hits" value="26 hits in 789 CRISPR screens"/>
</dbReference>
<dbReference type="GeneWiki" id="Aristaless_related_homeobox"/>
<dbReference type="GenomeRNAi" id="170302"/>
<dbReference type="Pharos" id="Q96QS3">
    <property type="development level" value="Tbio"/>
</dbReference>
<dbReference type="PRO" id="PR:Q96QS3"/>
<dbReference type="Proteomes" id="UP000005640">
    <property type="component" value="Chromosome X"/>
</dbReference>
<dbReference type="RNAct" id="Q96QS3">
    <property type="molecule type" value="protein"/>
</dbReference>
<dbReference type="Bgee" id="ENSG00000004848">
    <property type="expression patterns" value="Expressed in left ovary and 123 other cell types or tissues"/>
</dbReference>
<dbReference type="ExpressionAtlas" id="Q96QS3">
    <property type="expression patterns" value="baseline and differential"/>
</dbReference>
<dbReference type="GO" id="GO:0000785">
    <property type="term" value="C:chromatin"/>
    <property type="evidence" value="ECO:0000247"/>
    <property type="project" value="NTNU_SB"/>
</dbReference>
<dbReference type="GO" id="GO:0005634">
    <property type="term" value="C:nucleus"/>
    <property type="evidence" value="ECO:0000314"/>
    <property type="project" value="UniProtKB"/>
</dbReference>
<dbReference type="GO" id="GO:0003682">
    <property type="term" value="F:chromatin binding"/>
    <property type="evidence" value="ECO:0007669"/>
    <property type="project" value="Ensembl"/>
</dbReference>
<dbReference type="GO" id="GO:0001228">
    <property type="term" value="F:DNA-binding transcription activator activity, RNA polymerase II-specific"/>
    <property type="evidence" value="ECO:0000314"/>
    <property type="project" value="UniProtKB"/>
</dbReference>
<dbReference type="GO" id="GO:0000981">
    <property type="term" value="F:DNA-binding transcription factor activity, RNA polymerase II-specific"/>
    <property type="evidence" value="ECO:0000314"/>
    <property type="project" value="MGI"/>
</dbReference>
<dbReference type="GO" id="GO:0001227">
    <property type="term" value="F:DNA-binding transcription repressor activity, RNA polymerase II-specific"/>
    <property type="evidence" value="ECO:0000314"/>
    <property type="project" value="UniProtKB"/>
</dbReference>
<dbReference type="GO" id="GO:0000978">
    <property type="term" value="F:RNA polymerase II cis-regulatory region sequence-specific DNA binding"/>
    <property type="evidence" value="ECO:0000314"/>
    <property type="project" value="UniProtKB"/>
</dbReference>
<dbReference type="GO" id="GO:0000977">
    <property type="term" value="F:RNA polymerase II transcription regulatory region sequence-specific DNA binding"/>
    <property type="evidence" value="ECO:0000318"/>
    <property type="project" value="GO_Central"/>
</dbReference>
<dbReference type="GO" id="GO:1990837">
    <property type="term" value="F:sequence-specific double-stranded DNA binding"/>
    <property type="evidence" value="ECO:0000314"/>
    <property type="project" value="ARUK-UCL"/>
</dbReference>
<dbReference type="GO" id="GO:0007411">
    <property type="term" value="P:axon guidance"/>
    <property type="evidence" value="ECO:0007669"/>
    <property type="project" value="Ensembl"/>
</dbReference>
<dbReference type="GO" id="GO:0021846">
    <property type="term" value="P:cell proliferation in forebrain"/>
    <property type="evidence" value="ECO:0007669"/>
    <property type="project" value="Ensembl"/>
</dbReference>
<dbReference type="GO" id="GO:0021853">
    <property type="term" value="P:cerebral cortex GABAergic interneuron migration"/>
    <property type="evidence" value="ECO:0007669"/>
    <property type="project" value="Ensembl"/>
</dbReference>
<dbReference type="GO" id="GO:0021800">
    <property type="term" value="P:cerebral cortex tangential migration"/>
    <property type="evidence" value="ECO:0007669"/>
    <property type="project" value="Ensembl"/>
</dbReference>
<dbReference type="GO" id="GO:0021831">
    <property type="term" value="P:embryonic olfactory bulb interneuron precursor migration"/>
    <property type="evidence" value="ECO:0007669"/>
    <property type="project" value="Ensembl"/>
</dbReference>
<dbReference type="GO" id="GO:0072148">
    <property type="term" value="P:epithelial cell fate commitment"/>
    <property type="evidence" value="ECO:0007669"/>
    <property type="project" value="Ensembl"/>
</dbReference>
<dbReference type="GO" id="GO:0021759">
    <property type="term" value="P:globus pallidus development"/>
    <property type="evidence" value="ECO:0007669"/>
    <property type="project" value="Ensembl"/>
</dbReference>
<dbReference type="GO" id="GO:0044241">
    <property type="term" value="P:lipid digestion"/>
    <property type="evidence" value="ECO:0007669"/>
    <property type="project" value="Ensembl"/>
</dbReference>
<dbReference type="GO" id="GO:0000122">
    <property type="term" value="P:negative regulation of transcription by RNA polymerase II"/>
    <property type="evidence" value="ECO:0000314"/>
    <property type="project" value="UniProtKB"/>
</dbReference>
<dbReference type="GO" id="GO:0048663">
    <property type="term" value="P:neuron fate commitment"/>
    <property type="evidence" value="ECO:0007669"/>
    <property type="project" value="Ensembl"/>
</dbReference>
<dbReference type="GO" id="GO:0035265">
    <property type="term" value="P:organ growth"/>
    <property type="evidence" value="ECO:0007669"/>
    <property type="project" value="Ensembl"/>
</dbReference>
<dbReference type="GO" id="GO:0010628">
    <property type="term" value="P:positive regulation of gene expression"/>
    <property type="evidence" value="ECO:0007669"/>
    <property type="project" value="Ensembl"/>
</dbReference>
<dbReference type="GO" id="GO:0046622">
    <property type="term" value="P:positive regulation of organ growth"/>
    <property type="evidence" value="ECO:0007669"/>
    <property type="project" value="Ensembl"/>
</dbReference>
<dbReference type="GO" id="GO:0045944">
    <property type="term" value="P:positive regulation of transcription by RNA polymerase II"/>
    <property type="evidence" value="ECO:0000314"/>
    <property type="project" value="UniProtKB"/>
</dbReference>
<dbReference type="GO" id="GO:0050678">
    <property type="term" value="P:regulation of epithelial cell proliferation"/>
    <property type="evidence" value="ECO:0007669"/>
    <property type="project" value="Ensembl"/>
</dbReference>
<dbReference type="GO" id="GO:0006357">
    <property type="term" value="P:regulation of transcription by RNA polymerase II"/>
    <property type="evidence" value="ECO:0000318"/>
    <property type="project" value="GO_Central"/>
</dbReference>
<dbReference type="CDD" id="cd00086">
    <property type="entry name" value="homeodomain"/>
    <property type="match status" value="1"/>
</dbReference>
<dbReference type="FunFam" id="1.10.10.60:FF:000102">
    <property type="entry name" value="Aristaless related homeobox"/>
    <property type="match status" value="1"/>
</dbReference>
<dbReference type="Gene3D" id="1.10.10.60">
    <property type="entry name" value="Homeodomain-like"/>
    <property type="match status" value="1"/>
</dbReference>
<dbReference type="InterPro" id="IPR001356">
    <property type="entry name" value="HD"/>
</dbReference>
<dbReference type="InterPro" id="IPR017970">
    <property type="entry name" value="Homeobox_CS"/>
</dbReference>
<dbReference type="InterPro" id="IPR009057">
    <property type="entry name" value="Homeodomain-like_sf"/>
</dbReference>
<dbReference type="InterPro" id="IPR003654">
    <property type="entry name" value="OAR_dom"/>
</dbReference>
<dbReference type="InterPro" id="IPR050649">
    <property type="entry name" value="Paired_Homeobox_TFs"/>
</dbReference>
<dbReference type="PANTHER" id="PTHR24329:SF337">
    <property type="entry name" value="ARISTALESS RELATED HOMEOBOX"/>
    <property type="match status" value="1"/>
</dbReference>
<dbReference type="PANTHER" id="PTHR24329">
    <property type="entry name" value="HOMEOBOX PROTEIN ARISTALESS"/>
    <property type="match status" value="1"/>
</dbReference>
<dbReference type="Pfam" id="PF00046">
    <property type="entry name" value="Homeodomain"/>
    <property type="match status" value="1"/>
</dbReference>
<dbReference type="Pfam" id="PF03826">
    <property type="entry name" value="OAR"/>
    <property type="match status" value="1"/>
</dbReference>
<dbReference type="SMART" id="SM00389">
    <property type="entry name" value="HOX"/>
    <property type="match status" value="1"/>
</dbReference>
<dbReference type="SUPFAM" id="SSF46689">
    <property type="entry name" value="Homeodomain-like"/>
    <property type="match status" value="1"/>
</dbReference>
<dbReference type="PROSITE" id="PS00027">
    <property type="entry name" value="HOMEOBOX_1"/>
    <property type="match status" value="1"/>
</dbReference>
<dbReference type="PROSITE" id="PS50071">
    <property type="entry name" value="HOMEOBOX_2"/>
    <property type="match status" value="1"/>
</dbReference>
<dbReference type="PROSITE" id="PS50803">
    <property type="entry name" value="OAR"/>
    <property type="match status" value="1"/>
</dbReference>
<protein>
    <recommendedName>
        <fullName>Homeobox protein ARX</fullName>
    </recommendedName>
    <alternativeName>
        <fullName>Aristaless-related homeobox</fullName>
    </alternativeName>
</protein>
<sequence length="562" mass="58160">MSNQYQEEGCSERPECKSKSPTLLSSYCIDSILGRRSPCKMRLLGAAQSLPAPLTSRADPEKAVQGSPKSSSAPFEAELHLPPKLRRLYGPGGGRLLQGAAAAAAAAAAAAAAAATATAGPRGEAPPPPPPTARPGERPDGAGAAAAAAAAAAAAWDTLKISQAPQVSISRSKSYRENGAPFVPPPPALDELGGPGGVTHPEERLGVAGGPGSAPAAGGGTGTEDDEEELLEDEEDEDEEEELLEDDEEELLEDDARALLKEPRRCPVAATGAVAAAAAAAVATEGGELSPKEELLLHPEDAEGKDGEDSVCLSAGSDSEEGLLKRKQRRYRTTFTSYQLEELERAFQKTHYPDVFTREELAMRLDLTEARVQVWFQNRRAKWRKREKAGAQTHPPGLPFPGPLSATHPLSPYLDASPFPPHHPALDSAWTAAAAAAAAAFPSLPPPPGSASLPPSGAPLGLSTFLGAAVFRHPAFISPAFGRLFSTMAPLTSASTAAALLRQPTPAVEGAVASGALADPATAAADRRASSIAALRLKAKEHAAQLTQLNILPGTSTGKEVC</sequence>
<name>ARX_HUMAN</name>
<organism>
    <name type="scientific">Homo sapiens</name>
    <name type="common">Human</name>
    <dbReference type="NCBI Taxonomy" id="9606"/>
    <lineage>
        <taxon>Eukaryota</taxon>
        <taxon>Metazoa</taxon>
        <taxon>Chordata</taxon>
        <taxon>Craniata</taxon>
        <taxon>Vertebrata</taxon>
        <taxon>Euteleostomi</taxon>
        <taxon>Mammalia</taxon>
        <taxon>Eutheria</taxon>
        <taxon>Euarchontoglires</taxon>
        <taxon>Primates</taxon>
        <taxon>Haplorrhini</taxon>
        <taxon>Catarrhini</taxon>
        <taxon>Hominidae</taxon>
        <taxon>Homo</taxon>
    </lineage>
</organism>
<evidence type="ECO:0000250" key="1">
    <source>
        <dbReference type="UniProtKB" id="O35085"/>
    </source>
</evidence>
<evidence type="ECO:0000255" key="2">
    <source>
        <dbReference type="PROSITE-ProRule" id="PRU00108"/>
    </source>
</evidence>
<evidence type="ECO:0000255" key="3">
    <source>
        <dbReference type="PROSITE-ProRule" id="PRU00138"/>
    </source>
</evidence>
<evidence type="ECO:0000256" key="4">
    <source>
        <dbReference type="SAM" id="MobiDB-lite"/>
    </source>
</evidence>
<evidence type="ECO:0000269" key="5">
    <source>
    </source>
</evidence>
<evidence type="ECO:0000269" key="6">
    <source>
    </source>
</evidence>
<evidence type="ECO:0000269" key="7">
    <source>
    </source>
</evidence>
<evidence type="ECO:0000269" key="8">
    <source>
    </source>
</evidence>
<evidence type="ECO:0000269" key="9">
    <source>
    </source>
</evidence>
<evidence type="ECO:0000269" key="10">
    <source>
    </source>
</evidence>
<evidence type="ECO:0000269" key="11">
    <source>
    </source>
</evidence>
<evidence type="ECO:0000269" key="12">
    <source>
    </source>
</evidence>
<evidence type="ECO:0000269" key="13">
    <source>
    </source>
</evidence>
<evidence type="ECO:0000269" key="14">
    <source>
    </source>
</evidence>
<evidence type="ECO:0000303" key="15">
    <source>
    </source>
</evidence>
<evidence type="ECO:0000305" key="16"/>
<proteinExistence type="evidence at protein level"/>
<feature type="chain" id="PRO_0000048819" description="Homeobox protein ARX">
    <location>
        <begin position="1"/>
        <end position="562"/>
    </location>
</feature>
<feature type="DNA-binding region" description="Homeobox" evidence="2">
    <location>
        <begin position="328"/>
        <end position="387"/>
    </location>
</feature>
<feature type="region of interest" description="Disordered" evidence="4">
    <location>
        <begin position="1"/>
        <end position="21"/>
    </location>
</feature>
<feature type="region of interest" description="Disordered" evidence="4">
    <location>
        <begin position="50"/>
        <end position="81"/>
    </location>
</feature>
<feature type="region of interest" description="Disordered" evidence="4">
    <location>
        <begin position="118"/>
        <end position="255"/>
    </location>
</feature>
<feature type="short sequence motif" description="OAR" evidence="3">
    <location>
        <begin position="530"/>
        <end position="543"/>
    </location>
</feature>
<feature type="compositionally biased region" description="Pro residues" evidence="4">
    <location>
        <begin position="124"/>
        <end position="133"/>
    </location>
</feature>
<feature type="compositionally biased region" description="Low complexity" evidence="4">
    <location>
        <begin position="141"/>
        <end position="155"/>
    </location>
</feature>
<feature type="compositionally biased region" description="Polar residues" evidence="4">
    <location>
        <begin position="160"/>
        <end position="172"/>
    </location>
</feature>
<feature type="compositionally biased region" description="Gly residues" evidence="4">
    <location>
        <begin position="207"/>
        <end position="222"/>
    </location>
</feature>
<feature type="compositionally biased region" description="Acidic residues" evidence="4">
    <location>
        <begin position="223"/>
        <end position="253"/>
    </location>
</feature>
<feature type="sequence variant" id="VAR_015669" description="In XLID29; dbSNP:rs28936077." evidence="6">
    <original>L</original>
    <variation>P</variation>
    <location>
        <position position="33"/>
    </location>
</feature>
<feature type="sequence variant" id="VAR_015177" description="In DEE1.">
    <original>A</original>
    <variation>AAAAAAAA</variation>
    <location>
        <position position="115"/>
    </location>
</feature>
<feature type="sequence variant" id="VAR_015670" description="In DEE1 and PRTS; also found in non-specific intellectual disability families; frequent variant." evidence="5 8">
    <original>A</original>
    <variation>AAAAAAAAA</variation>
    <location>
        <position position="155"/>
    </location>
</feature>
<feature type="sequence variant" id="VAR_015671" description="In XLID29; dbSNP:rs28935479." evidence="6">
    <original>G</original>
    <variation>S</variation>
    <location>
        <position position="286"/>
    </location>
</feature>
<feature type="sequence variant" id="VAR_015178" description="In LISX2; dbSNP:rs111033612." evidence="9 10">
    <original>R</original>
    <variation>H</variation>
    <location>
        <position position="332"/>
    </location>
</feature>
<feature type="sequence variant" id="VAR_033260" description="In LISX2; abolishes transcriptional activation of KDM5C; abolishes sequence-specific DNA-binding; reduces transcriptional repression of LMO1 and SHOX2." evidence="10 11 13">
    <original>R</original>
    <variation>P</variation>
    <location>
        <position position="332"/>
    </location>
</feature>
<feature type="sequence variant" id="VAR_033261" description="In ACCAG; abolishes transcriptional activation of KDM5C; abolishes sequence-specific DNA-binding; reduces transcriptional repression of LMO1 and SHOX2; dbSNP:rs104894745." evidence="10 11 13">
    <original>T</original>
    <variation>N</variation>
    <location>
        <position position="333"/>
    </location>
</feature>
<feature type="sequence variant" id="VAR_015179" description="In LISX2; abolishes transcriptional activation of KDM5C; abolishes sequence-specific DNA-binding; reduces transcriptional repression of LMO1 and SHOX2; dbSNP:rs104894741." evidence="9 10 11 13">
    <original>L</original>
    <variation>Q</variation>
    <location>
        <position position="343"/>
    </location>
</feature>
<feature type="sequence variant" id="VAR_015180" description="In DEE1; corpus callosum hypoplasia and simplified gyral pattern observed in one patient; reduces sequence-specific DNA-binding; slightly reduces transcriptional repression of LMO1; dbSNP:rs104894743." evidence="5 11 12">
    <original>P</original>
    <variation>L</variation>
    <location>
        <position position="353"/>
    </location>
</feature>
<feature type="sequence variant" id="VAR_033262" description="In LISX2; abolishes transcriptional activation of KDM5C; abolishes sequence-specific DNA-binding; reduces transcriptional repression of LMO1 and SHOX2." evidence="10 11 13">
    <original>P</original>
    <variation>R</variation>
    <location>
        <position position="353"/>
    </location>
</feature>
<feature type="sequence variant" id="VAR_088524" description="Found in a patient with a neurodevelopmental disorder; uncertain significance." evidence="14">
    <original>A</original>
    <variation>V</variation>
    <location>
        <position position="370"/>
    </location>
</feature>
<feature type="sequence variant" id="VAR_033263" description="In LISX2; severe phenotype; dbSNP:rs746120093." evidence="10">
    <original>A</original>
    <variation>T</variation>
    <location>
        <position position="521"/>
    </location>
</feature>
<feature type="mutagenesis site" description="Abolishes sequence-specific DNA-binding; reduces transcriptional repression of LMO1 and SHOX2. Abolishes transcriptional activation of KDM5C." evidence="11 13">
    <original>R</original>
    <variation>S</variation>
    <location>
        <position position="358"/>
    </location>
</feature>
<feature type="mutagenesis site" description="Abolishes sequence-specific DNA-binding; reduces transcriptional repression of LMO1 and SHOX2. Abolishes transcriptional activation of KDM5C." evidence="11 13">
    <original>R</original>
    <variation>L</variation>
    <variation>S</variation>
    <location>
        <position position="379"/>
    </location>
</feature>
<accession>Q96QS3</accession>
<keyword id="KW-0217">Developmental protein</keyword>
<keyword id="KW-0221">Differentiation</keyword>
<keyword id="KW-0225">Disease variant</keyword>
<keyword id="KW-0238">DNA-binding</keyword>
<keyword id="KW-0887">Epilepsy</keyword>
<keyword id="KW-0371">Homeobox</keyword>
<keyword id="KW-0991">Intellectual disability</keyword>
<keyword id="KW-0451">Lissencephaly</keyword>
<keyword id="KW-0524">Neurogenesis</keyword>
<keyword id="KW-0539">Nucleus</keyword>
<keyword id="KW-1267">Proteomics identification</keyword>
<keyword id="KW-1185">Reference proteome</keyword>
<keyword id="KW-0804">Transcription</keyword>
<keyword id="KW-0805">Transcription regulation</keyword>
<keyword id="KW-0818">Triplet repeat expansion</keyword>